<reference key="1">
    <citation type="journal article" date="2011" name="J. Bacteriol.">
        <title>Comparative genomics of 28 Salmonella enterica isolates: evidence for CRISPR-mediated adaptive sublineage evolution.</title>
        <authorList>
            <person name="Fricke W.F."/>
            <person name="Mammel M.K."/>
            <person name="McDermott P.F."/>
            <person name="Tartera C."/>
            <person name="White D.G."/>
            <person name="Leclerc J.E."/>
            <person name="Ravel J."/>
            <person name="Cebula T.A."/>
        </authorList>
    </citation>
    <scope>NUCLEOTIDE SEQUENCE [LARGE SCALE GENOMIC DNA]</scope>
    <source>
        <strain>SL254</strain>
    </source>
</reference>
<feature type="chain" id="PRO_1000092349" description="Hydroxylamine reductase">
    <location>
        <begin position="1"/>
        <end position="550"/>
    </location>
</feature>
<feature type="binding site" evidence="1">
    <location>
        <position position="3"/>
    </location>
    <ligand>
        <name>[2Fe-2S] cluster</name>
        <dbReference type="ChEBI" id="CHEBI:190135"/>
    </ligand>
</feature>
<feature type="binding site" evidence="1">
    <location>
        <position position="6"/>
    </location>
    <ligand>
        <name>[2Fe-2S] cluster</name>
        <dbReference type="ChEBI" id="CHEBI:190135"/>
    </ligand>
</feature>
<feature type="binding site" evidence="1">
    <location>
        <position position="18"/>
    </location>
    <ligand>
        <name>[2Fe-2S] cluster</name>
        <dbReference type="ChEBI" id="CHEBI:190135"/>
    </ligand>
</feature>
<feature type="binding site" evidence="1">
    <location>
        <position position="25"/>
    </location>
    <ligand>
        <name>[2Fe-2S] cluster</name>
        <dbReference type="ChEBI" id="CHEBI:190135"/>
    </ligand>
</feature>
<feature type="binding site" evidence="1">
    <location>
        <position position="249"/>
    </location>
    <ligand>
        <name>hybrid [4Fe-2O-2S] cluster</name>
        <dbReference type="ChEBI" id="CHEBI:60519"/>
    </ligand>
</feature>
<feature type="binding site" evidence="1">
    <location>
        <position position="273"/>
    </location>
    <ligand>
        <name>hybrid [4Fe-2O-2S] cluster</name>
        <dbReference type="ChEBI" id="CHEBI:60519"/>
    </ligand>
</feature>
<feature type="binding site" evidence="1">
    <location>
        <position position="317"/>
    </location>
    <ligand>
        <name>hybrid [4Fe-2O-2S] cluster</name>
        <dbReference type="ChEBI" id="CHEBI:60519"/>
    </ligand>
</feature>
<feature type="binding site" description="via persulfide group" evidence="1">
    <location>
        <position position="405"/>
    </location>
    <ligand>
        <name>hybrid [4Fe-2O-2S] cluster</name>
        <dbReference type="ChEBI" id="CHEBI:60519"/>
    </ligand>
</feature>
<feature type="binding site" evidence="1">
    <location>
        <position position="433"/>
    </location>
    <ligand>
        <name>hybrid [4Fe-2O-2S] cluster</name>
        <dbReference type="ChEBI" id="CHEBI:60519"/>
    </ligand>
</feature>
<feature type="binding site" evidence="1">
    <location>
        <position position="458"/>
    </location>
    <ligand>
        <name>hybrid [4Fe-2O-2S] cluster</name>
        <dbReference type="ChEBI" id="CHEBI:60519"/>
    </ligand>
</feature>
<feature type="binding site" evidence="1">
    <location>
        <position position="492"/>
    </location>
    <ligand>
        <name>hybrid [4Fe-2O-2S] cluster</name>
        <dbReference type="ChEBI" id="CHEBI:60519"/>
    </ligand>
</feature>
<feature type="binding site" evidence="1">
    <location>
        <position position="494"/>
    </location>
    <ligand>
        <name>hybrid [4Fe-2O-2S] cluster</name>
        <dbReference type="ChEBI" id="CHEBI:60519"/>
    </ligand>
</feature>
<feature type="modified residue" description="Cysteine persulfide" evidence="1">
    <location>
        <position position="405"/>
    </location>
</feature>
<proteinExistence type="inferred from homology"/>
<protein>
    <recommendedName>
        <fullName evidence="1">Hydroxylamine reductase</fullName>
        <ecNumber evidence="1">1.7.99.1</ecNumber>
    </recommendedName>
    <alternativeName>
        <fullName evidence="1">Hybrid-cluster protein</fullName>
        <shortName evidence="1">HCP</shortName>
    </alternativeName>
    <alternativeName>
        <fullName evidence="1">Prismane protein</fullName>
    </alternativeName>
</protein>
<dbReference type="EC" id="1.7.99.1" evidence="1"/>
<dbReference type="EMBL" id="CP001113">
    <property type="protein sequence ID" value="ACF63740.1"/>
    <property type="molecule type" value="Genomic_DNA"/>
</dbReference>
<dbReference type="RefSeq" id="WP_000458785.1">
    <property type="nucleotide sequence ID" value="NZ_CCMR01000003.1"/>
</dbReference>
<dbReference type="SMR" id="B4T0F9"/>
<dbReference type="KEGG" id="see:SNSL254_A0972"/>
<dbReference type="HOGENOM" id="CLU_038344_2_0_6"/>
<dbReference type="Proteomes" id="UP000008824">
    <property type="component" value="Chromosome"/>
</dbReference>
<dbReference type="GO" id="GO:0005737">
    <property type="term" value="C:cytoplasm"/>
    <property type="evidence" value="ECO:0007669"/>
    <property type="project" value="UniProtKB-SubCell"/>
</dbReference>
<dbReference type="GO" id="GO:0051537">
    <property type="term" value="F:2 iron, 2 sulfur cluster binding"/>
    <property type="evidence" value="ECO:0007669"/>
    <property type="project" value="UniProtKB-KW"/>
</dbReference>
<dbReference type="GO" id="GO:0050418">
    <property type="term" value="F:hydroxylamine reductase activity"/>
    <property type="evidence" value="ECO:0007669"/>
    <property type="project" value="UniProtKB-UniRule"/>
</dbReference>
<dbReference type="GO" id="GO:0046872">
    <property type="term" value="F:metal ion binding"/>
    <property type="evidence" value="ECO:0007669"/>
    <property type="project" value="UniProtKB-KW"/>
</dbReference>
<dbReference type="GO" id="GO:0004601">
    <property type="term" value="F:peroxidase activity"/>
    <property type="evidence" value="ECO:0007669"/>
    <property type="project" value="TreeGrafter"/>
</dbReference>
<dbReference type="GO" id="GO:0042542">
    <property type="term" value="P:response to hydrogen peroxide"/>
    <property type="evidence" value="ECO:0007669"/>
    <property type="project" value="TreeGrafter"/>
</dbReference>
<dbReference type="CDD" id="cd01914">
    <property type="entry name" value="HCP"/>
    <property type="match status" value="1"/>
</dbReference>
<dbReference type="FunFam" id="1.20.1270.20:FF:000001">
    <property type="entry name" value="Hydroxylamine reductase"/>
    <property type="match status" value="1"/>
</dbReference>
<dbReference type="FunFam" id="1.20.1270.20:FF:000002">
    <property type="entry name" value="Hydroxylamine reductase"/>
    <property type="match status" value="1"/>
</dbReference>
<dbReference type="FunFam" id="3.40.50.2030:FF:000001">
    <property type="entry name" value="Hydroxylamine reductase"/>
    <property type="match status" value="1"/>
</dbReference>
<dbReference type="FunFam" id="3.40.50.2030:FF:000002">
    <property type="entry name" value="Hydroxylamine reductase"/>
    <property type="match status" value="1"/>
</dbReference>
<dbReference type="Gene3D" id="1.20.1270.20">
    <property type="match status" value="2"/>
</dbReference>
<dbReference type="Gene3D" id="3.40.50.2030">
    <property type="match status" value="2"/>
</dbReference>
<dbReference type="HAMAP" id="MF_00069">
    <property type="entry name" value="Hydroxylam_reduct"/>
    <property type="match status" value="1"/>
</dbReference>
<dbReference type="InterPro" id="IPR004137">
    <property type="entry name" value="HCP/CODH"/>
</dbReference>
<dbReference type="InterPro" id="IPR010048">
    <property type="entry name" value="Hydroxylam_reduct"/>
</dbReference>
<dbReference type="InterPro" id="IPR016099">
    <property type="entry name" value="Prismane-like_a/b-sand"/>
</dbReference>
<dbReference type="InterPro" id="IPR011254">
    <property type="entry name" value="Prismane-like_sf"/>
</dbReference>
<dbReference type="InterPro" id="IPR016100">
    <property type="entry name" value="Prismane_a-bundle"/>
</dbReference>
<dbReference type="NCBIfam" id="TIGR01703">
    <property type="entry name" value="hybrid_clust"/>
    <property type="match status" value="1"/>
</dbReference>
<dbReference type="NCBIfam" id="NF003658">
    <property type="entry name" value="PRK05290.1"/>
    <property type="match status" value="1"/>
</dbReference>
<dbReference type="PANTHER" id="PTHR30109">
    <property type="entry name" value="HYDROXYLAMINE REDUCTASE"/>
    <property type="match status" value="1"/>
</dbReference>
<dbReference type="PANTHER" id="PTHR30109:SF0">
    <property type="entry name" value="HYDROXYLAMINE REDUCTASE"/>
    <property type="match status" value="1"/>
</dbReference>
<dbReference type="Pfam" id="PF03063">
    <property type="entry name" value="Prismane"/>
    <property type="match status" value="1"/>
</dbReference>
<dbReference type="PIRSF" id="PIRSF000076">
    <property type="entry name" value="HCP"/>
    <property type="match status" value="1"/>
</dbReference>
<dbReference type="SUPFAM" id="SSF56821">
    <property type="entry name" value="Prismane protein-like"/>
    <property type="match status" value="1"/>
</dbReference>
<keyword id="KW-0001">2Fe-2S</keyword>
<keyword id="KW-0963">Cytoplasm</keyword>
<keyword id="KW-0408">Iron</keyword>
<keyword id="KW-0411">Iron-sulfur</keyword>
<keyword id="KW-0479">Metal-binding</keyword>
<keyword id="KW-0560">Oxidoreductase</keyword>
<organism>
    <name type="scientific">Salmonella newport (strain SL254)</name>
    <dbReference type="NCBI Taxonomy" id="423368"/>
    <lineage>
        <taxon>Bacteria</taxon>
        <taxon>Pseudomonadati</taxon>
        <taxon>Pseudomonadota</taxon>
        <taxon>Gammaproteobacteria</taxon>
        <taxon>Enterobacterales</taxon>
        <taxon>Enterobacteriaceae</taxon>
        <taxon>Salmonella</taxon>
    </lineage>
</organism>
<evidence type="ECO:0000255" key="1">
    <source>
        <dbReference type="HAMAP-Rule" id="MF_00069"/>
    </source>
</evidence>
<gene>
    <name evidence="1" type="primary">hcp</name>
    <name type="ordered locus">SNSL254_A0972</name>
</gene>
<name>HCP_SALNS</name>
<accession>B4T0F9</accession>
<sequence>MFCVQCEQTIRTPAGNGCSYAQGMCGKTAETSDLQDLLIAALQGLSAWAVKAREYGIINHDVDNFAPRAFFSTLTNVNFDSPRIVGYAREAIALREALKAQCLSVDANAHCDNPMADLQLVSDDLGELQRQAAEFTPNKDKAAIGENILGLRLLCLYGLKGAAAYMEHAHVLGQYDNDIYAQYHKIMAWLGTWPADMNALLECAMEIGQMNFKVMSILDAGETTKYGHPTPTQVNVKATEGKCILISGHDLKDLYNLLEQTEGTGVNVYTHGEMLPAHGYPELRKFKHLVGNYGSGWQNQQVEFARFPGPIVMTSNCIIDPTVGSYDDRIWTRSIVGWPGVSHLEGDDFGPVIAQAQQMAGFPYSEIPHLITVGFGRQTLLGAADTLIDLVSREKLRHIFLVGGCDGARGERNYFTDFATSVPDDCLILTLACGKYRFNKLEFGDIEGLPRLVDAGQCNDAYSAIILAVTLAEKLGCGVNDLPLSLVLSWFEQKAIVILLTLLSLGVKNIVTGPTAPGFFTPDLLAILNEKFGLRSVTTVEEDMKQLLSA</sequence>
<comment type="function">
    <text evidence="1">Catalyzes the reduction of hydroxylamine to form NH(3) and H(2)O.</text>
</comment>
<comment type="catalytic activity">
    <reaction evidence="1">
        <text>A + NH4(+) + H2O = hydroxylamine + AH2 + H(+)</text>
        <dbReference type="Rhea" id="RHEA:22052"/>
        <dbReference type="ChEBI" id="CHEBI:13193"/>
        <dbReference type="ChEBI" id="CHEBI:15377"/>
        <dbReference type="ChEBI" id="CHEBI:15378"/>
        <dbReference type="ChEBI" id="CHEBI:15429"/>
        <dbReference type="ChEBI" id="CHEBI:17499"/>
        <dbReference type="ChEBI" id="CHEBI:28938"/>
        <dbReference type="EC" id="1.7.99.1"/>
    </reaction>
</comment>
<comment type="cofactor">
    <cofactor evidence="1">
        <name>[2Fe-2S] cluster</name>
        <dbReference type="ChEBI" id="CHEBI:190135"/>
    </cofactor>
    <text evidence="1">Binds 1 [2Fe-2S] cluster.</text>
</comment>
<comment type="cofactor">
    <cofactor evidence="1">
        <name>hybrid [4Fe-2O-2S] cluster</name>
        <dbReference type="ChEBI" id="CHEBI:60519"/>
    </cofactor>
    <text evidence="1">Binds 1 hybrid [4Fe-2O-2S] cluster.</text>
</comment>
<comment type="subcellular location">
    <subcellularLocation>
        <location evidence="1">Cytoplasm</location>
    </subcellularLocation>
</comment>
<comment type="similarity">
    <text evidence="1">Belongs to the HCP family.</text>
</comment>